<protein>
    <recommendedName>
        <fullName evidence="8">Exostosin-2</fullName>
        <ecNumber evidence="5">2.4.1.224</ecNumber>
    </recommendedName>
    <alternativeName>
        <fullName evidence="10">Exostosin glycosyltransferase 2</fullName>
    </alternativeName>
    <alternativeName>
        <fullName evidence="9">Glucuronosyl-N-acetylglucosaminyl-proteoglycan 4-alpha-N-acetylglucosaminyltransferase</fullName>
    </alternativeName>
    <alternativeName>
        <fullName>Multiple exostoses protein 2 homolog</fullName>
    </alternativeName>
</protein>
<dbReference type="EC" id="2.4.1.224" evidence="5"/>
<dbReference type="EMBL" id="U72141">
    <property type="protein sequence ID" value="AAB17006.1"/>
    <property type="molecule type" value="mRNA"/>
</dbReference>
<dbReference type="EMBL" id="U67837">
    <property type="protein sequence ID" value="AAC53143.1"/>
    <property type="molecule type" value="mRNA"/>
</dbReference>
<dbReference type="EMBL" id="AK164342">
    <property type="protein sequence ID" value="BAE37749.1"/>
    <property type="molecule type" value="mRNA"/>
</dbReference>
<dbReference type="EMBL" id="AL732472">
    <property type="status" value="NOT_ANNOTATED_CDS"/>
    <property type="molecule type" value="Genomic_DNA"/>
</dbReference>
<dbReference type="EMBL" id="AL732493">
    <property type="status" value="NOT_ANNOTATED_CDS"/>
    <property type="molecule type" value="Genomic_DNA"/>
</dbReference>
<dbReference type="EMBL" id="CH466519">
    <property type="protein sequence ID" value="EDL27629.1"/>
    <property type="molecule type" value="Genomic_DNA"/>
</dbReference>
<dbReference type="EMBL" id="BC006597">
    <property type="protein sequence ID" value="AAH06597.1"/>
    <property type="molecule type" value="mRNA"/>
</dbReference>
<dbReference type="CCDS" id="CCDS16456.1"/>
<dbReference type="RefSeq" id="NP_001342004.2">
    <property type="nucleotide sequence ID" value="NM_001355075.2"/>
</dbReference>
<dbReference type="RefSeq" id="NP_001404002.1">
    <property type="nucleotide sequence ID" value="NM_001417073.1"/>
</dbReference>
<dbReference type="RefSeq" id="NP_001404003.1">
    <property type="nucleotide sequence ID" value="NM_001417074.1"/>
</dbReference>
<dbReference type="RefSeq" id="NP_001404004.1">
    <property type="nucleotide sequence ID" value="NM_001417075.1"/>
</dbReference>
<dbReference type="RefSeq" id="NP_034293.2">
    <property type="nucleotide sequence ID" value="NM_010163.4"/>
</dbReference>
<dbReference type="RefSeq" id="XP_006498796.1">
    <property type="nucleotide sequence ID" value="XM_006498733.3"/>
</dbReference>
<dbReference type="SMR" id="P70428"/>
<dbReference type="BioGRID" id="199557">
    <property type="interactions" value="5"/>
</dbReference>
<dbReference type="DIP" id="DIP-29858N"/>
<dbReference type="FunCoup" id="P70428">
    <property type="interactions" value="1994"/>
</dbReference>
<dbReference type="IntAct" id="P70428">
    <property type="interactions" value="1"/>
</dbReference>
<dbReference type="STRING" id="10090.ENSMUSP00000028623"/>
<dbReference type="CAZy" id="GT47">
    <property type="family name" value="Glycosyltransferase Family 47"/>
</dbReference>
<dbReference type="CAZy" id="GT64">
    <property type="family name" value="Glycosyltransferase Family 64"/>
</dbReference>
<dbReference type="GlyCosmos" id="P70428">
    <property type="glycosylation" value="2 sites, No reported glycans"/>
</dbReference>
<dbReference type="GlyGen" id="P70428">
    <property type="glycosylation" value="2 sites, 1 N-linked glycan (1 site)"/>
</dbReference>
<dbReference type="iPTMnet" id="P70428"/>
<dbReference type="PhosphoSitePlus" id="P70428"/>
<dbReference type="CPTAC" id="non-CPTAC-4033"/>
<dbReference type="jPOST" id="P70428"/>
<dbReference type="PaxDb" id="10090-ENSMUSP00000028623"/>
<dbReference type="PeptideAtlas" id="P70428"/>
<dbReference type="ProteomicsDB" id="275806"/>
<dbReference type="Pumba" id="P70428"/>
<dbReference type="Antibodypedia" id="26103">
    <property type="antibodies" value="230 antibodies from 30 providers"/>
</dbReference>
<dbReference type="DNASU" id="14043"/>
<dbReference type="Ensembl" id="ENSMUST00000028623.13">
    <property type="protein sequence ID" value="ENSMUSP00000028623.7"/>
    <property type="gene ID" value="ENSMUSG00000027198.17"/>
</dbReference>
<dbReference type="GeneID" id="14043"/>
<dbReference type="KEGG" id="mmu:14043"/>
<dbReference type="UCSC" id="uc008lgf.2">
    <property type="organism name" value="mouse"/>
</dbReference>
<dbReference type="AGR" id="MGI:108050"/>
<dbReference type="CTD" id="2132"/>
<dbReference type="MGI" id="MGI:108050">
    <property type="gene designation" value="Ext2"/>
</dbReference>
<dbReference type="VEuPathDB" id="HostDB:ENSMUSG00000027198"/>
<dbReference type="eggNOG" id="KOG1022">
    <property type="taxonomic scope" value="Eukaryota"/>
</dbReference>
<dbReference type="GeneTree" id="ENSGT00940000156620"/>
<dbReference type="HOGENOM" id="CLU_013906_4_1_1"/>
<dbReference type="InParanoid" id="P70428"/>
<dbReference type="OMA" id="NCTFWDC"/>
<dbReference type="OrthoDB" id="5954868at2759"/>
<dbReference type="PhylomeDB" id="P70428"/>
<dbReference type="TreeFam" id="TF314231"/>
<dbReference type="BRENDA" id="2.4.1.224">
    <property type="organism ID" value="3474"/>
</dbReference>
<dbReference type="Reactome" id="R-MMU-2022928">
    <property type="pathway name" value="HS-GAG biosynthesis"/>
</dbReference>
<dbReference type="UniPathway" id="UPA00378"/>
<dbReference type="BioGRID-ORCS" id="14043">
    <property type="hits" value="8 hits in 79 CRISPR screens"/>
</dbReference>
<dbReference type="ChiTaRS" id="Ext2">
    <property type="organism name" value="mouse"/>
</dbReference>
<dbReference type="PRO" id="PR:P70428"/>
<dbReference type="Proteomes" id="UP000000589">
    <property type="component" value="Chromosome 2"/>
</dbReference>
<dbReference type="RNAct" id="P70428">
    <property type="molecule type" value="protein"/>
</dbReference>
<dbReference type="Bgee" id="ENSMUSG00000027198">
    <property type="expression patterns" value="Expressed in embryonic post-anal tail and 257 other cell types or tissues"/>
</dbReference>
<dbReference type="ExpressionAtlas" id="P70428">
    <property type="expression patterns" value="baseline and differential"/>
</dbReference>
<dbReference type="GO" id="GO:1902494">
    <property type="term" value="C:catalytic complex"/>
    <property type="evidence" value="ECO:0000250"/>
    <property type="project" value="UniProtKB"/>
</dbReference>
<dbReference type="GO" id="GO:0005783">
    <property type="term" value="C:endoplasmic reticulum"/>
    <property type="evidence" value="ECO:0000314"/>
    <property type="project" value="BHF-UCL"/>
</dbReference>
<dbReference type="GO" id="GO:0005789">
    <property type="term" value="C:endoplasmic reticulum membrane"/>
    <property type="evidence" value="ECO:0000305"/>
    <property type="project" value="BHF-UCL"/>
</dbReference>
<dbReference type="GO" id="GO:0005576">
    <property type="term" value="C:extracellular region"/>
    <property type="evidence" value="ECO:0007669"/>
    <property type="project" value="UniProtKB-SubCell"/>
</dbReference>
<dbReference type="GO" id="GO:0005794">
    <property type="term" value="C:Golgi apparatus"/>
    <property type="evidence" value="ECO:0000314"/>
    <property type="project" value="BHF-UCL"/>
</dbReference>
<dbReference type="GO" id="GO:0000139">
    <property type="term" value="C:Golgi membrane"/>
    <property type="evidence" value="ECO:0000305"/>
    <property type="project" value="BHF-UCL"/>
</dbReference>
<dbReference type="GO" id="GO:0043541">
    <property type="term" value="C:UDP-N-acetylglucosamine transferase complex"/>
    <property type="evidence" value="ECO:0007669"/>
    <property type="project" value="Ensembl"/>
</dbReference>
<dbReference type="GO" id="GO:0008375">
    <property type="term" value="F:acetylglucosaminyltransferase activity"/>
    <property type="evidence" value="ECO:0000314"/>
    <property type="project" value="BHF-UCL"/>
</dbReference>
<dbReference type="GO" id="GO:0050508">
    <property type="term" value="F:glucuronosyl-N-acetylglucosaminyl-proteoglycan 4-alpha-N-acetylglucosaminyltransferase activity"/>
    <property type="evidence" value="ECO:0000316"/>
    <property type="project" value="MGI"/>
</dbReference>
<dbReference type="GO" id="GO:0015020">
    <property type="term" value="F:glucuronosyltransferase activity"/>
    <property type="evidence" value="ECO:0000314"/>
    <property type="project" value="BHF-UCL"/>
</dbReference>
<dbReference type="GO" id="GO:0042328">
    <property type="term" value="F:heparan sulfate N-acetylglucosaminyltransferase activity"/>
    <property type="evidence" value="ECO:0000305"/>
    <property type="project" value="BHF-UCL"/>
</dbReference>
<dbReference type="GO" id="GO:0046872">
    <property type="term" value="F:metal ion binding"/>
    <property type="evidence" value="ECO:0007669"/>
    <property type="project" value="UniProtKB-KW"/>
</dbReference>
<dbReference type="GO" id="GO:0050509">
    <property type="term" value="F:N-acetylglucosaminyl-proteoglycan 4-beta-glucuronosyltransferase activity"/>
    <property type="evidence" value="ECO:0000316"/>
    <property type="project" value="MGI"/>
</dbReference>
<dbReference type="GO" id="GO:0046982">
    <property type="term" value="F:protein heterodimerization activity"/>
    <property type="evidence" value="ECO:0007669"/>
    <property type="project" value="Ensembl"/>
</dbReference>
<dbReference type="GO" id="GO:0042803">
    <property type="term" value="F:protein homodimerization activity"/>
    <property type="evidence" value="ECO:0000314"/>
    <property type="project" value="BHF-UCL"/>
</dbReference>
<dbReference type="GO" id="GO:0044344">
    <property type="term" value="P:cellular response to fibroblast growth factor stimulus"/>
    <property type="evidence" value="ECO:0000315"/>
    <property type="project" value="MGI"/>
</dbReference>
<dbReference type="GO" id="GO:0002062">
    <property type="term" value="P:chondrocyte differentiation"/>
    <property type="evidence" value="ECO:0000315"/>
    <property type="project" value="MGI"/>
</dbReference>
<dbReference type="GO" id="GO:0060350">
    <property type="term" value="P:endochondral bone morphogenesis"/>
    <property type="evidence" value="ECO:0000316"/>
    <property type="project" value="MGI"/>
</dbReference>
<dbReference type="GO" id="GO:0042044">
    <property type="term" value="P:fluid transport"/>
    <property type="evidence" value="ECO:0000316"/>
    <property type="project" value="MGI"/>
</dbReference>
<dbReference type="GO" id="GO:0010467">
    <property type="term" value="P:gene expression"/>
    <property type="evidence" value="ECO:0000314"/>
    <property type="project" value="MGI"/>
</dbReference>
<dbReference type="GO" id="GO:0006024">
    <property type="term" value="P:glycosaminoglycan biosynthetic process"/>
    <property type="evidence" value="ECO:0007669"/>
    <property type="project" value="Ensembl"/>
</dbReference>
<dbReference type="GO" id="GO:0060047">
    <property type="term" value="P:heart contraction"/>
    <property type="evidence" value="ECO:0000316"/>
    <property type="project" value="MGI"/>
</dbReference>
<dbReference type="GO" id="GO:0015012">
    <property type="term" value="P:heparan sulfate proteoglycan biosynthetic process"/>
    <property type="evidence" value="ECO:0000315"/>
    <property type="project" value="MGI"/>
</dbReference>
<dbReference type="GO" id="GO:0030210">
    <property type="term" value="P:heparin proteoglycan biosynthetic process"/>
    <property type="evidence" value="ECO:0000316"/>
    <property type="project" value="MGI"/>
</dbReference>
<dbReference type="GO" id="GO:0001707">
    <property type="term" value="P:mesoderm formation"/>
    <property type="evidence" value="ECO:0000315"/>
    <property type="project" value="MGI"/>
</dbReference>
<dbReference type="GO" id="GO:0050891">
    <property type="term" value="P:multicellular organismal-level water homeostasis"/>
    <property type="evidence" value="ECO:0000316"/>
    <property type="project" value="MGI"/>
</dbReference>
<dbReference type="GO" id="GO:0001503">
    <property type="term" value="P:ossification"/>
    <property type="evidence" value="ECO:0007669"/>
    <property type="project" value="Ensembl"/>
</dbReference>
<dbReference type="GO" id="GO:0000271">
    <property type="term" value="P:polysaccharide biosynthetic process"/>
    <property type="evidence" value="ECO:0007669"/>
    <property type="project" value="Ensembl"/>
</dbReference>
<dbReference type="GO" id="GO:0006487">
    <property type="term" value="P:protein N-linked glycosylation"/>
    <property type="evidence" value="ECO:0000314"/>
    <property type="project" value="MGI"/>
</dbReference>
<dbReference type="GO" id="GO:0008217">
    <property type="term" value="P:regulation of blood pressure"/>
    <property type="evidence" value="ECO:0000316"/>
    <property type="project" value="MGI"/>
</dbReference>
<dbReference type="GO" id="GO:0055078">
    <property type="term" value="P:sodium ion homeostasis"/>
    <property type="evidence" value="ECO:0000316"/>
    <property type="project" value="MGI"/>
</dbReference>
<dbReference type="GO" id="GO:0051923">
    <property type="term" value="P:sulfation"/>
    <property type="evidence" value="ECO:0000314"/>
    <property type="project" value="MGI"/>
</dbReference>
<dbReference type="GO" id="GO:0042311">
    <property type="term" value="P:vasodilation"/>
    <property type="evidence" value="ECO:0000316"/>
    <property type="project" value="MGI"/>
</dbReference>
<dbReference type="FunFam" id="3.90.550.10:FF:000035">
    <property type="entry name" value="Putative Exostosin-2"/>
    <property type="match status" value="1"/>
</dbReference>
<dbReference type="Gene3D" id="3.90.550.10">
    <property type="entry name" value="Spore Coat Polysaccharide Biosynthesis Protein SpsA, Chain A"/>
    <property type="match status" value="1"/>
</dbReference>
<dbReference type="InterPro" id="IPR004263">
    <property type="entry name" value="Exostosin"/>
</dbReference>
<dbReference type="InterPro" id="IPR040911">
    <property type="entry name" value="Exostosin_GT47"/>
</dbReference>
<dbReference type="InterPro" id="IPR015338">
    <property type="entry name" value="GT64_dom"/>
</dbReference>
<dbReference type="InterPro" id="IPR029044">
    <property type="entry name" value="Nucleotide-diphossugar_trans"/>
</dbReference>
<dbReference type="PANTHER" id="PTHR48261">
    <property type="entry name" value="ACETYLGLUCOSAMINYLTRANSFERASE"/>
    <property type="match status" value="1"/>
</dbReference>
<dbReference type="PANTHER" id="PTHR48261:SF5">
    <property type="entry name" value="EXOSTOSIN GLYCOSYLTRANSFERASE 2"/>
    <property type="match status" value="1"/>
</dbReference>
<dbReference type="Pfam" id="PF03016">
    <property type="entry name" value="Exostosin_GT47"/>
    <property type="match status" value="1"/>
</dbReference>
<dbReference type="Pfam" id="PF09258">
    <property type="entry name" value="Glyco_transf_64"/>
    <property type="match status" value="1"/>
</dbReference>
<dbReference type="SUPFAM" id="SSF53448">
    <property type="entry name" value="Nucleotide-diphospho-sugar transferases"/>
    <property type="match status" value="1"/>
</dbReference>
<evidence type="ECO:0000250" key="1">
    <source>
        <dbReference type="UniProtKB" id="O77783"/>
    </source>
</evidence>
<evidence type="ECO:0000250" key="2">
    <source>
        <dbReference type="UniProtKB" id="Q93063"/>
    </source>
</evidence>
<evidence type="ECO:0000250" key="3">
    <source>
        <dbReference type="UniProtKB" id="Q9ES89"/>
    </source>
</evidence>
<evidence type="ECO:0000255" key="4"/>
<evidence type="ECO:0000269" key="5">
    <source>
    </source>
</evidence>
<evidence type="ECO:0000269" key="6">
    <source>
    </source>
</evidence>
<evidence type="ECO:0000269" key="7">
    <source>
    </source>
</evidence>
<evidence type="ECO:0000305" key="8"/>
<evidence type="ECO:0000305" key="9">
    <source>
    </source>
</evidence>
<evidence type="ECO:0000312" key="10">
    <source>
        <dbReference type="MGI" id="MGI:108050"/>
    </source>
</evidence>
<proteinExistence type="evidence at protein level"/>
<gene>
    <name evidence="10" type="primary">Ext2</name>
</gene>
<accession>P70428</accession>
<accession>P70395</accession>
<accession>Q3TPI7</accession>
<accession>Q923D6</accession>
<comment type="function">
    <text evidence="2 5">Glycosyltransferase forming with EXT1 the heterodimeric heparan sulfate polymerase which catalyzes the elongation of the heparan sulfate glycan backbone. Glycan backbone extension consists in the alternating transfer of (1-&gt;4)-beta-D-GlcA and (1-&gt;4)-alpha-D-GlcNAc residues from their respective UDP-sugar donors (PubMed:10639137). Both EXT1 and EXT2 are required for the full activity of the polymerase since EXT1 bears the N-acetylglucosaminyl-proteoglycan 4-beta-glucuronosyltransferase activity within the complex while EXT2 carries the glucuronosyl-N-acetylglucosaminyl-proteoglycan 4-alpha-N-acetylglucosaminyltransferase activity. Heparan sulfate proteoglycans are ubiquitous components of the extracellular matrix and play an important role in tissue homeostasis and signaling (By similarity).</text>
</comment>
<comment type="catalytic activity">
    <reaction evidence="5">
        <text>3-O-{[(1-&gt;4)-beta-D-GlcA-(1-&gt;4)-alpha-D-GlcNAc](n)-(1-&gt;4)-beta-D-GlcA-(1-&gt;3)-beta-D-Gal-(1-&gt;3)-beta-D-Gal-(1-&gt;4)-beta-D-Xyl}-L-seryl-[protein] + UDP-N-acetyl-alpha-D-glucosamine = 3-O-{alpha-D-GlcNAc-[(1-&gt;4)-beta-D-GlcA-(1-&gt;4)-alpha-D-GlcNAc](n)-(1-&gt;4)-beta-D-GlcA-(1-&gt;3)-beta-D-Gal-(1-&gt;3)-beta-D-Gal-(1-&gt;4)-beta-D-Xyl}-L-seryl-[protein] + UDP + H(+)</text>
        <dbReference type="Rhea" id="RHEA:16213"/>
        <dbReference type="Rhea" id="RHEA-COMP:12621"/>
        <dbReference type="Rhea" id="RHEA-COMP:12623"/>
        <dbReference type="ChEBI" id="CHEBI:15378"/>
        <dbReference type="ChEBI" id="CHEBI:57705"/>
        <dbReference type="ChEBI" id="CHEBI:58223"/>
        <dbReference type="ChEBI" id="CHEBI:132415"/>
        <dbReference type="ChEBI" id="CHEBI:132416"/>
        <dbReference type="EC" id="2.4.1.224"/>
    </reaction>
    <physiologicalReaction direction="left-to-right" evidence="9">
        <dbReference type="Rhea" id="RHEA:16214"/>
    </physiologicalReaction>
</comment>
<comment type="cofactor">
    <cofactor evidence="2">
        <name>Mn(2+)</name>
        <dbReference type="ChEBI" id="CHEBI:29035"/>
    </cofactor>
</comment>
<comment type="pathway">
    <text evidence="5">Protein modification; protein glycosylation.</text>
</comment>
<comment type="subunit">
    <text evidence="2 5">Part of the heparan sulfate polymerase, a dimeric complex composed of EXT1 and EXT2 (PubMed:10639137). Could also form homooligomeric complexes (PubMed:10639137). Interacts with NDST1 (By similarity). Interacts with GALNT5 (By similarity).</text>
</comment>
<comment type="interaction">
    <interactant intactId="EBI-15693102">
        <id>P70428</id>
    </interactant>
    <interactant intactId="EBI-15693148">
        <id>Q3UHN9</id>
        <label>Ndst1</label>
    </interactant>
    <organismsDiffer>false</organismsDiffer>
    <experiments>2</experiments>
</comment>
<comment type="subcellular location">
    <subcellularLocation>
        <location evidence="5">Golgi apparatus membrane</location>
        <topology evidence="4">Single-pass type II membrane protein</topology>
    </subcellularLocation>
    <subcellularLocation>
        <location evidence="2">Golgi apparatus</location>
        <location evidence="2">cis-Golgi network membrane</location>
        <topology evidence="4">Single-pass type II membrane protein</topology>
    </subcellularLocation>
    <subcellularLocation>
        <location evidence="2">Endoplasmic reticulum membrane</location>
        <topology evidence="4">Single-pass type II membrane protein</topology>
    </subcellularLocation>
    <subcellularLocation>
        <location evidence="1">Secreted</location>
    </subcellularLocation>
    <text evidence="5">The active heparan sulfate polymerase complex composed of EXT1 and EXT2 is localized to the Golgi apparatus. If both proteins are individually detected in the endoplasmic reticulum, the formation of the complex promotes their transport to the Golgi.</text>
</comment>
<comment type="tissue specificity">
    <text evidence="6 7">Expressed in heart, brain, spleen, lung, liver, skeletal muscle and testis. Heart shows a high expression.</text>
</comment>
<comment type="developmental stage">
    <text evidence="7">Expressed in early stages of embryonic development.</text>
</comment>
<comment type="PTM">
    <text evidence="2">N-glycosylated at Asn-637.</text>
</comment>
<comment type="PTM">
    <text evidence="1">A soluble form is generated by proteolytic processing.</text>
</comment>
<comment type="similarity">
    <text evidence="8">Belongs to the glycosyltransferase 47 family.</text>
</comment>
<organism>
    <name type="scientific">Mus musculus</name>
    <name type="common">Mouse</name>
    <dbReference type="NCBI Taxonomy" id="10090"/>
    <lineage>
        <taxon>Eukaryota</taxon>
        <taxon>Metazoa</taxon>
        <taxon>Chordata</taxon>
        <taxon>Craniata</taxon>
        <taxon>Vertebrata</taxon>
        <taxon>Euteleostomi</taxon>
        <taxon>Mammalia</taxon>
        <taxon>Eutheria</taxon>
        <taxon>Euarchontoglires</taxon>
        <taxon>Glires</taxon>
        <taxon>Rodentia</taxon>
        <taxon>Myomorpha</taxon>
        <taxon>Muroidea</taxon>
        <taxon>Muridae</taxon>
        <taxon>Murinae</taxon>
        <taxon>Mus</taxon>
        <taxon>Mus</taxon>
    </lineage>
</organism>
<sequence length="718" mass="82064">MCASVKSNIRGPALIPRMKTKHRIYYVTLFSIVLLGLIATGMFQFWPHSIESSSDGGVEKRSIREVPVVRLPTDSPIPERGDLSCRMHTCFDVYRCGFNPKNKIKVYIYPLKKYVDDAGVPVSSAISREYNELLTAISDSDYYTDDINRACLFVPSIDVLNQNPLRIKETAQALAQLSRWDRGTNHLLFNMLPGAPPDYNTALDVPRDRALLAGGGFSTWTYRQGYDVSIPVFSPLSAEMALPEKAPGPRRYFLLSSQMAIHPEYREELEALQAKHQESVLVLDKCTNLSEGVLSVRKRCHQHQVFDYPQVLQEATFCTVLRGARLGQAVLSDVLQAGCVPVVIADSYILPFSEVLDWKRASVVVPEEKMSDVYSILQNIPQRQIEEMQRQARWFWEAYFQSIKAIALATLQIINDRIYPYAAISYEEWNDPPAVKWASVSNPLFLPLIPPQSQGFTAIVLTYDRVESLFRVITEVSKVPSLSKLLVVWNNQNKNPPEESLWPKIRVPLKVVRTAENKLSNRFFPYDEIETEAVLAIDDDIIMLTSDELQFGYEVWREFPDRLVGYPGRLHLWDHEMNKWKYESEWTNEVSMVLTGAAFYHKYFNYLYTYKMPGDIKNWVDTHMNCEDIAMNFLVANVTGKAVIKVTPRKKFKCPECTAIDGLSLDQTHMVERSECINKFASVFGTMPLKVVEHRADPVLYKDDFPEKLKSFPNIGSL</sequence>
<reference key="1">
    <citation type="journal article" date="1997" name="Biochem. Mol. Med.">
        <title>Isolation and characterization of the murine homolog of the human EXT2 multiple exostoses gene.</title>
        <authorList>
            <person name="Stickens D.J."/>
            <person name="Evans G.A."/>
        </authorList>
    </citation>
    <scope>NUCLEOTIDE SEQUENCE [MRNA]</scope>
    <scope>TISSUE SPECIFICITY</scope>
    <scope>DEVELOPMENTAL STAGE</scope>
</reference>
<reference key="2">
    <citation type="journal article" date="1997" name="Genome Res.">
        <title>The structure of the human multiple exostoses 2 gene and characterization of homologs in mouse and Caenorhabditis elegans.</title>
        <authorList>
            <person name="Clines G.A."/>
            <person name="Ashley J.A."/>
            <person name="Shah S."/>
            <person name="Lovett M."/>
        </authorList>
    </citation>
    <scope>NUCLEOTIDE SEQUENCE [MRNA]</scope>
    <source>
        <tissue>Brain</tissue>
    </source>
</reference>
<reference key="3">
    <citation type="journal article" date="2005" name="Science">
        <title>The transcriptional landscape of the mammalian genome.</title>
        <authorList>
            <person name="Carninci P."/>
            <person name="Kasukawa T."/>
            <person name="Katayama S."/>
            <person name="Gough J."/>
            <person name="Frith M.C."/>
            <person name="Maeda N."/>
            <person name="Oyama R."/>
            <person name="Ravasi T."/>
            <person name="Lenhard B."/>
            <person name="Wells C."/>
            <person name="Kodzius R."/>
            <person name="Shimokawa K."/>
            <person name="Bajic V.B."/>
            <person name="Brenner S.E."/>
            <person name="Batalov S."/>
            <person name="Forrest A.R."/>
            <person name="Zavolan M."/>
            <person name="Davis M.J."/>
            <person name="Wilming L.G."/>
            <person name="Aidinis V."/>
            <person name="Allen J.E."/>
            <person name="Ambesi-Impiombato A."/>
            <person name="Apweiler R."/>
            <person name="Aturaliya R.N."/>
            <person name="Bailey T.L."/>
            <person name="Bansal M."/>
            <person name="Baxter L."/>
            <person name="Beisel K.W."/>
            <person name="Bersano T."/>
            <person name="Bono H."/>
            <person name="Chalk A.M."/>
            <person name="Chiu K.P."/>
            <person name="Choudhary V."/>
            <person name="Christoffels A."/>
            <person name="Clutterbuck D.R."/>
            <person name="Crowe M.L."/>
            <person name="Dalla E."/>
            <person name="Dalrymple B.P."/>
            <person name="de Bono B."/>
            <person name="Della Gatta G."/>
            <person name="di Bernardo D."/>
            <person name="Down T."/>
            <person name="Engstrom P."/>
            <person name="Fagiolini M."/>
            <person name="Faulkner G."/>
            <person name="Fletcher C.F."/>
            <person name="Fukushima T."/>
            <person name="Furuno M."/>
            <person name="Futaki S."/>
            <person name="Gariboldi M."/>
            <person name="Georgii-Hemming P."/>
            <person name="Gingeras T.R."/>
            <person name="Gojobori T."/>
            <person name="Green R.E."/>
            <person name="Gustincich S."/>
            <person name="Harbers M."/>
            <person name="Hayashi Y."/>
            <person name="Hensch T.K."/>
            <person name="Hirokawa N."/>
            <person name="Hill D."/>
            <person name="Huminiecki L."/>
            <person name="Iacono M."/>
            <person name="Ikeo K."/>
            <person name="Iwama A."/>
            <person name="Ishikawa T."/>
            <person name="Jakt M."/>
            <person name="Kanapin A."/>
            <person name="Katoh M."/>
            <person name="Kawasawa Y."/>
            <person name="Kelso J."/>
            <person name="Kitamura H."/>
            <person name="Kitano H."/>
            <person name="Kollias G."/>
            <person name="Krishnan S.P."/>
            <person name="Kruger A."/>
            <person name="Kummerfeld S.K."/>
            <person name="Kurochkin I.V."/>
            <person name="Lareau L.F."/>
            <person name="Lazarevic D."/>
            <person name="Lipovich L."/>
            <person name="Liu J."/>
            <person name="Liuni S."/>
            <person name="McWilliam S."/>
            <person name="Madan Babu M."/>
            <person name="Madera M."/>
            <person name="Marchionni L."/>
            <person name="Matsuda H."/>
            <person name="Matsuzawa S."/>
            <person name="Miki H."/>
            <person name="Mignone F."/>
            <person name="Miyake S."/>
            <person name="Morris K."/>
            <person name="Mottagui-Tabar S."/>
            <person name="Mulder N."/>
            <person name="Nakano N."/>
            <person name="Nakauchi H."/>
            <person name="Ng P."/>
            <person name="Nilsson R."/>
            <person name="Nishiguchi S."/>
            <person name="Nishikawa S."/>
            <person name="Nori F."/>
            <person name="Ohara O."/>
            <person name="Okazaki Y."/>
            <person name="Orlando V."/>
            <person name="Pang K.C."/>
            <person name="Pavan W.J."/>
            <person name="Pavesi G."/>
            <person name="Pesole G."/>
            <person name="Petrovsky N."/>
            <person name="Piazza S."/>
            <person name="Reed J."/>
            <person name="Reid J.F."/>
            <person name="Ring B.Z."/>
            <person name="Ringwald M."/>
            <person name="Rost B."/>
            <person name="Ruan Y."/>
            <person name="Salzberg S.L."/>
            <person name="Sandelin A."/>
            <person name="Schneider C."/>
            <person name="Schoenbach C."/>
            <person name="Sekiguchi K."/>
            <person name="Semple C.A."/>
            <person name="Seno S."/>
            <person name="Sessa L."/>
            <person name="Sheng Y."/>
            <person name="Shibata Y."/>
            <person name="Shimada H."/>
            <person name="Shimada K."/>
            <person name="Silva D."/>
            <person name="Sinclair B."/>
            <person name="Sperling S."/>
            <person name="Stupka E."/>
            <person name="Sugiura K."/>
            <person name="Sultana R."/>
            <person name="Takenaka Y."/>
            <person name="Taki K."/>
            <person name="Tammoja K."/>
            <person name="Tan S.L."/>
            <person name="Tang S."/>
            <person name="Taylor M.S."/>
            <person name="Tegner J."/>
            <person name="Teichmann S.A."/>
            <person name="Ueda H.R."/>
            <person name="van Nimwegen E."/>
            <person name="Verardo R."/>
            <person name="Wei C.L."/>
            <person name="Yagi K."/>
            <person name="Yamanishi H."/>
            <person name="Zabarovsky E."/>
            <person name="Zhu S."/>
            <person name="Zimmer A."/>
            <person name="Hide W."/>
            <person name="Bult C."/>
            <person name="Grimmond S.M."/>
            <person name="Teasdale R.D."/>
            <person name="Liu E.T."/>
            <person name="Brusic V."/>
            <person name="Quackenbush J."/>
            <person name="Wahlestedt C."/>
            <person name="Mattick J.S."/>
            <person name="Hume D.A."/>
            <person name="Kai C."/>
            <person name="Sasaki D."/>
            <person name="Tomaru Y."/>
            <person name="Fukuda S."/>
            <person name="Kanamori-Katayama M."/>
            <person name="Suzuki M."/>
            <person name="Aoki J."/>
            <person name="Arakawa T."/>
            <person name="Iida J."/>
            <person name="Imamura K."/>
            <person name="Itoh M."/>
            <person name="Kato T."/>
            <person name="Kawaji H."/>
            <person name="Kawagashira N."/>
            <person name="Kawashima T."/>
            <person name="Kojima M."/>
            <person name="Kondo S."/>
            <person name="Konno H."/>
            <person name="Nakano K."/>
            <person name="Ninomiya N."/>
            <person name="Nishio T."/>
            <person name="Okada M."/>
            <person name="Plessy C."/>
            <person name="Shibata K."/>
            <person name="Shiraki T."/>
            <person name="Suzuki S."/>
            <person name="Tagami M."/>
            <person name="Waki K."/>
            <person name="Watahiki A."/>
            <person name="Okamura-Oho Y."/>
            <person name="Suzuki H."/>
            <person name="Kawai J."/>
            <person name="Hayashizaki Y."/>
        </authorList>
    </citation>
    <scope>NUCLEOTIDE SEQUENCE [LARGE SCALE MRNA]</scope>
    <source>
        <strain>C57BL/6J</strain>
        <tissue>Spinal ganglion</tissue>
    </source>
</reference>
<reference key="4">
    <citation type="journal article" date="2009" name="PLoS Biol.">
        <title>Lineage-specific biology revealed by a finished genome assembly of the mouse.</title>
        <authorList>
            <person name="Church D.M."/>
            <person name="Goodstadt L."/>
            <person name="Hillier L.W."/>
            <person name="Zody M.C."/>
            <person name="Goldstein S."/>
            <person name="She X."/>
            <person name="Bult C.J."/>
            <person name="Agarwala R."/>
            <person name="Cherry J.L."/>
            <person name="DiCuccio M."/>
            <person name="Hlavina W."/>
            <person name="Kapustin Y."/>
            <person name="Meric P."/>
            <person name="Maglott D."/>
            <person name="Birtle Z."/>
            <person name="Marques A.C."/>
            <person name="Graves T."/>
            <person name="Zhou S."/>
            <person name="Teague B."/>
            <person name="Potamousis K."/>
            <person name="Churas C."/>
            <person name="Place M."/>
            <person name="Herschleb J."/>
            <person name="Runnheim R."/>
            <person name="Forrest D."/>
            <person name="Amos-Landgraf J."/>
            <person name="Schwartz D.C."/>
            <person name="Cheng Z."/>
            <person name="Lindblad-Toh K."/>
            <person name="Eichler E.E."/>
            <person name="Ponting C.P."/>
        </authorList>
    </citation>
    <scope>NUCLEOTIDE SEQUENCE [LARGE SCALE GENOMIC DNA]</scope>
    <source>
        <strain>C57BL/6J</strain>
    </source>
</reference>
<reference key="5">
    <citation type="submission" date="2005-07" db="EMBL/GenBank/DDBJ databases">
        <authorList>
            <person name="Mural R.J."/>
            <person name="Adams M.D."/>
            <person name="Myers E.W."/>
            <person name="Smith H.O."/>
            <person name="Venter J.C."/>
        </authorList>
    </citation>
    <scope>NUCLEOTIDE SEQUENCE [LARGE SCALE GENOMIC DNA]</scope>
</reference>
<reference key="6">
    <citation type="journal article" date="2004" name="Genome Res.">
        <title>The status, quality, and expansion of the NIH full-length cDNA project: the Mammalian Gene Collection (MGC).</title>
        <authorList>
            <consortium name="The MGC Project Team"/>
        </authorList>
    </citation>
    <scope>NUCLEOTIDE SEQUENCE [LARGE SCALE MRNA]</scope>
    <source>
        <tissue>Mammary gland</tissue>
    </source>
</reference>
<reference key="7">
    <citation type="journal article" date="2000" name="Proc. Natl. Acad. Sci. U.S.A.">
        <title>The putative tumor suppressors EXT1 and EXT2 form a stable complex that accumulates in the Golgi apparatus and catalyzes the synthesis of heparan sulfate.</title>
        <authorList>
            <person name="McCormick C."/>
            <person name="Duncan G."/>
            <person name="Goutsos K.T."/>
            <person name="Tufaro F."/>
        </authorList>
    </citation>
    <scope>FUNCTION</scope>
    <scope>CATALYTIC ACTIVITY</scope>
    <scope>PATHWAY</scope>
    <scope>SUBUNIT</scope>
    <scope>SUBCELLULAR LOCATION</scope>
</reference>
<reference key="8">
    <citation type="journal article" date="2008" name="Proc. Natl. Acad. Sci. U.S.A.">
        <title>Heparan sulfate biosynthesis enzymes EXT1 and EXT2 affect NDST1 expression and heparan sulfate sulfation.</title>
        <authorList>
            <person name="Presto J."/>
            <person name="Thuveson M."/>
            <person name="Carlsson P."/>
            <person name="Busse M."/>
            <person name="Wilen M."/>
            <person name="Eriksson I."/>
            <person name="Kusche-Gullberg M."/>
            <person name="Kjellen L."/>
        </authorList>
    </citation>
    <scope>TISSUE SPECIFICITY</scope>
</reference>
<name>EXT2_MOUSE</name>
<feature type="chain" id="PRO_0000149652" description="Exostosin-2">
    <location>
        <begin position="1"/>
        <end position="718"/>
    </location>
</feature>
<feature type="topological domain" description="Cytoplasmic" evidence="4">
    <location>
        <begin position="1"/>
        <end position="25"/>
    </location>
</feature>
<feature type="transmembrane region" description="Helical; Signal-anchor for type II membrane protein" evidence="4">
    <location>
        <begin position="26"/>
        <end position="46"/>
    </location>
</feature>
<feature type="topological domain" description="Lumenal" evidence="4">
    <location>
        <begin position="47"/>
        <end position="718"/>
    </location>
</feature>
<feature type="binding site" evidence="2">
    <location>
        <position position="461"/>
    </location>
    <ligand>
        <name>UDP</name>
        <dbReference type="ChEBI" id="CHEBI:58223"/>
    </ligand>
</feature>
<feature type="binding site" evidence="2">
    <location>
        <position position="465"/>
    </location>
    <ligand>
        <name>UDP</name>
        <dbReference type="ChEBI" id="CHEBI:58223"/>
    </ligand>
</feature>
<feature type="binding site" evidence="3">
    <location>
        <position position="465"/>
    </location>
    <ligand>
        <name>UDP-N-acetyl-alpha-D-glucosamine</name>
        <dbReference type="ChEBI" id="CHEBI:57705"/>
    </ligand>
</feature>
<feature type="binding site" evidence="2">
    <location>
        <position position="490"/>
    </location>
    <ligand>
        <name>UDP</name>
        <dbReference type="ChEBI" id="CHEBI:58223"/>
    </ligand>
</feature>
<feature type="binding site" evidence="3">
    <location>
        <position position="490"/>
    </location>
    <ligand>
        <name>UDP-N-acetyl-alpha-D-glucosamine</name>
        <dbReference type="ChEBI" id="CHEBI:57705"/>
    </ligand>
</feature>
<feature type="binding site" evidence="2">
    <location>
        <position position="517"/>
    </location>
    <ligand>
        <name>UDP</name>
        <dbReference type="ChEBI" id="CHEBI:58223"/>
    </ligand>
</feature>
<feature type="binding site" evidence="3">
    <location>
        <position position="517"/>
    </location>
    <ligand>
        <name>UDP-N-acetyl-alpha-D-glucosamine</name>
        <dbReference type="ChEBI" id="CHEBI:57705"/>
    </ligand>
</feature>
<feature type="binding site" evidence="3">
    <location>
        <position position="522"/>
    </location>
    <ligand>
        <name>UDP-N-acetyl-alpha-D-glucosamine</name>
        <dbReference type="ChEBI" id="CHEBI:57705"/>
    </ligand>
</feature>
<feature type="binding site" evidence="2">
    <location>
        <position position="538"/>
    </location>
    <ligand>
        <name>UDP</name>
        <dbReference type="ChEBI" id="CHEBI:58223"/>
    </ligand>
</feature>
<feature type="binding site" evidence="3">
    <location>
        <position position="538"/>
    </location>
    <ligand>
        <name>UDP-N-acetyl-alpha-D-glucosamine</name>
        <dbReference type="ChEBI" id="CHEBI:57705"/>
    </ligand>
</feature>
<feature type="binding site" evidence="2">
    <location>
        <position position="539"/>
    </location>
    <ligand>
        <name>UDP</name>
        <dbReference type="ChEBI" id="CHEBI:58223"/>
    </ligand>
</feature>
<feature type="binding site" evidence="3">
    <location>
        <position position="539"/>
    </location>
    <ligand>
        <name>UDP-N-acetyl-alpha-D-glucosamine</name>
        <dbReference type="ChEBI" id="CHEBI:57705"/>
    </ligand>
</feature>
<feature type="binding site" evidence="3">
    <location>
        <position position="540"/>
    </location>
    <ligand>
        <name>Mn(2+)</name>
        <dbReference type="ChEBI" id="CHEBI:29035"/>
        <note>catalytic</note>
    </ligand>
</feature>
<feature type="binding site" evidence="3">
    <location>
        <position position="540"/>
    </location>
    <ligand>
        <name>UDP-N-acetyl-alpha-D-glucosamine</name>
        <dbReference type="ChEBI" id="CHEBI:57705"/>
    </ligand>
</feature>
<feature type="binding site" evidence="2">
    <location>
        <position position="582"/>
    </location>
    <ligand>
        <name>a protein</name>
        <dbReference type="ChEBI" id="CHEBI:16541"/>
    </ligand>
    <ligandPart>
        <name>O(3)-(poly[(1-&gt;4)-beta-D-glucuronosyl-(1-&gt;4)-N-acetyl-alpha-D-glucosaminyl]-(1-&gt;4)-beta-D-glucuronosyl-(1-&gt;3)-beta-D-galactosyl-(1-&gt;3)-beta-D-galactosyl-(1-&gt;4)-beta-D-xylosyl)-L-serine residue</name>
        <dbReference type="ChEBI" id="CHEBI:132415"/>
    </ligandPart>
</feature>
<feature type="binding site" evidence="2">
    <location>
        <position position="584"/>
    </location>
    <ligand>
        <name>a protein</name>
        <dbReference type="ChEBI" id="CHEBI:16541"/>
    </ligand>
    <ligandPart>
        <name>O(3)-(poly[(1-&gt;4)-beta-D-glucuronosyl-(1-&gt;4)-N-acetyl-alpha-D-glucosaminyl]-(1-&gt;4)-beta-D-glucuronosyl-(1-&gt;3)-beta-D-galactosyl-(1-&gt;3)-beta-D-galactosyl-(1-&gt;4)-beta-D-xylosyl)-L-serine residue</name>
        <dbReference type="ChEBI" id="CHEBI:132415"/>
    </ligandPart>
</feature>
<feature type="binding site" evidence="3">
    <location>
        <position position="627"/>
    </location>
    <ligand>
        <name>UDP-N-acetyl-alpha-D-glucosamine</name>
        <dbReference type="ChEBI" id="CHEBI:57705"/>
    </ligand>
</feature>
<feature type="binding site" evidence="3">
    <location>
        <position position="628"/>
    </location>
    <ligand>
        <name>UDP-N-acetyl-alpha-D-glucosamine</name>
        <dbReference type="ChEBI" id="CHEBI:57705"/>
    </ligand>
</feature>
<feature type="binding site" evidence="2">
    <location>
        <position position="651"/>
    </location>
    <ligand>
        <name>a protein</name>
        <dbReference type="ChEBI" id="CHEBI:16541"/>
    </ligand>
    <ligandPart>
        <name>O(3)-(poly[(1-&gt;4)-beta-D-glucuronosyl-(1-&gt;4)-N-acetyl-alpha-D-glucosaminyl]-(1-&gt;4)-beta-D-glucuronosyl-(1-&gt;3)-beta-D-galactosyl-(1-&gt;3)-beta-D-galactosyl-(1-&gt;4)-beta-D-xylosyl)-L-serine residue</name>
        <dbReference type="ChEBI" id="CHEBI:132415"/>
    </ligandPart>
</feature>
<feature type="binding site" evidence="2">
    <location>
        <position position="653"/>
    </location>
    <ligand>
        <name>a protein</name>
        <dbReference type="ChEBI" id="CHEBI:16541"/>
    </ligand>
    <ligandPart>
        <name>O(3)-(poly[(1-&gt;4)-beta-D-glucuronosyl-(1-&gt;4)-N-acetyl-alpha-D-glucosaminyl]-(1-&gt;4)-beta-D-glucuronosyl-(1-&gt;3)-beta-D-galactosyl-(1-&gt;3)-beta-D-galactosyl-(1-&gt;4)-beta-D-xylosyl)-L-serine residue</name>
        <dbReference type="ChEBI" id="CHEBI:132415"/>
    </ligandPart>
</feature>
<feature type="binding site" evidence="3">
    <location>
        <position position="673"/>
    </location>
    <ligand>
        <name>UDP-N-acetyl-alpha-D-glucosamine</name>
        <dbReference type="ChEBI" id="CHEBI:57705"/>
    </ligand>
</feature>
<feature type="glycosylation site" description="N-linked (GlcNAc...) asparagine" evidence="4">
    <location>
        <position position="288"/>
    </location>
</feature>
<feature type="glycosylation site" description="N-linked (GlcNAc...) asparagine" evidence="4">
    <location>
        <position position="637"/>
    </location>
</feature>
<feature type="disulfide bond" evidence="2">
    <location>
        <begin position="85"/>
        <end position="90"/>
    </location>
</feature>
<feature type="disulfide bond" evidence="2">
    <location>
        <begin position="96"/>
        <end position="151"/>
    </location>
</feature>
<feature type="disulfide bond" evidence="2">
    <location>
        <begin position="286"/>
        <end position="300"/>
    </location>
</feature>
<feature type="disulfide bond" evidence="2">
    <location>
        <begin position="318"/>
        <end position="339"/>
    </location>
</feature>
<feature type="disulfide bond" evidence="3">
    <location>
        <begin position="626"/>
        <end position="676"/>
    </location>
</feature>
<feature type="sequence conflict" description="In Ref. 2; AAC53143." evidence="8" ref="2">
    <original>S</original>
    <variation>T</variation>
    <location>
        <position position="62"/>
    </location>
</feature>
<feature type="sequence conflict" description="In Ref. 2; AAC53143." evidence="8" ref="2">
    <original>L</original>
    <variation>V</variation>
    <location>
        <position position="160"/>
    </location>
</feature>
<feature type="sequence conflict" description="In Ref. 2; AAC53143." evidence="8" ref="2">
    <original>G</original>
    <variation>R</variation>
    <location>
        <position position="323"/>
    </location>
</feature>
<feature type="sequence conflict" description="In Ref. 2; AAC53143." evidence="8" ref="2">
    <original>V</original>
    <variation>I</variation>
    <location>
        <position position="355"/>
    </location>
</feature>
<feature type="sequence conflict" description="In Ref. 2; AAC53143." evidence="8" ref="2">
    <original>R</original>
    <variation>K</variation>
    <location>
        <position position="360"/>
    </location>
</feature>
<feature type="sequence conflict" description="In Ref. 2; AAC53143." evidence="8" ref="2">
    <original>Q</original>
    <variation>H</variation>
    <location>
        <position position="389"/>
    </location>
</feature>
<feature type="sequence conflict" description="In Ref. 2; AAC53143." evidence="8" ref="2">
    <original>T</original>
    <variation>A</variation>
    <location>
        <position position="622"/>
    </location>
</feature>
<keyword id="KW-1015">Disulfide bond</keyword>
<keyword id="KW-0256">Endoplasmic reticulum</keyword>
<keyword id="KW-0325">Glycoprotein</keyword>
<keyword id="KW-0328">Glycosyltransferase</keyword>
<keyword id="KW-0333">Golgi apparatus</keyword>
<keyword id="KW-0464">Manganese</keyword>
<keyword id="KW-0472">Membrane</keyword>
<keyword id="KW-0479">Metal-binding</keyword>
<keyword id="KW-1185">Reference proteome</keyword>
<keyword id="KW-0964">Secreted</keyword>
<keyword id="KW-0735">Signal-anchor</keyword>
<keyword id="KW-0808">Transferase</keyword>
<keyword id="KW-0812">Transmembrane</keyword>
<keyword id="KW-1133">Transmembrane helix</keyword>